<reference key="1">
    <citation type="journal article" date="2002" name="J. Mol. Microbiol. Biotechnol.">
        <title>The genome of Methanosarcina mazei: evidence for lateral gene transfer between Bacteria and Archaea.</title>
        <authorList>
            <person name="Deppenmeier U."/>
            <person name="Johann A."/>
            <person name="Hartsch T."/>
            <person name="Merkl R."/>
            <person name="Schmitz R.A."/>
            <person name="Martinez-Arias R."/>
            <person name="Henne A."/>
            <person name="Wiezer A."/>
            <person name="Baeumer S."/>
            <person name="Jacobi C."/>
            <person name="Brueggemann H."/>
            <person name="Lienard T."/>
            <person name="Christmann A."/>
            <person name="Boemecke M."/>
            <person name="Steckel S."/>
            <person name="Bhattacharyya A."/>
            <person name="Lykidis A."/>
            <person name="Overbeek R."/>
            <person name="Klenk H.-P."/>
            <person name="Gunsalus R.P."/>
            <person name="Fritz H.-J."/>
            <person name="Gottschalk G."/>
        </authorList>
    </citation>
    <scope>NUCLEOTIDE SEQUENCE [LARGE SCALE GENOMIC DNA]</scope>
    <source>
        <strain>ATCC BAA-159 / DSM 3647 / Goe1 / Go1 / JCM 11833 / OCM 88</strain>
    </source>
</reference>
<protein>
    <recommendedName>
        <fullName evidence="1">Glycerol-1-phosphate dehydrogenase [NAD(P)+]</fullName>
        <shortName evidence="1">G1P dehydrogenase</shortName>
        <shortName evidence="1">G1PDH</shortName>
        <ecNumber evidence="1">1.1.1.261</ecNumber>
    </recommendedName>
    <alternativeName>
        <fullName evidence="1">Enantiomeric glycerophosphate synthase</fullName>
    </alternativeName>
    <alternativeName>
        <fullName evidence="1">sn-glycerol-1-phosphate dehydrogenase</fullName>
    </alternativeName>
</protein>
<accession>Q8PZA4</accession>
<proteinExistence type="inferred from homology"/>
<gene>
    <name evidence="1" type="primary">egsA</name>
    <name type="ordered locus">MM_0590</name>
</gene>
<keyword id="KW-0963">Cytoplasm</keyword>
<keyword id="KW-0444">Lipid biosynthesis</keyword>
<keyword id="KW-0443">Lipid metabolism</keyword>
<keyword id="KW-0479">Metal-binding</keyword>
<keyword id="KW-0520">NAD</keyword>
<keyword id="KW-0521">NADP</keyword>
<keyword id="KW-0560">Oxidoreductase</keyword>
<keyword id="KW-0594">Phospholipid biosynthesis</keyword>
<keyword id="KW-1208">Phospholipid metabolism</keyword>
<keyword id="KW-0862">Zinc</keyword>
<evidence type="ECO:0000255" key="1">
    <source>
        <dbReference type="HAMAP-Rule" id="MF_00497"/>
    </source>
</evidence>
<name>G1PDH_METMA</name>
<dbReference type="EC" id="1.1.1.261" evidence="1"/>
<dbReference type="EMBL" id="AE008384">
    <property type="protein sequence ID" value="AAM30286.1"/>
    <property type="molecule type" value="Genomic_DNA"/>
</dbReference>
<dbReference type="RefSeq" id="WP_011032541.1">
    <property type="nucleotide sequence ID" value="NC_003901.1"/>
</dbReference>
<dbReference type="SMR" id="Q8PZA4"/>
<dbReference type="KEGG" id="mma:MM_0590"/>
<dbReference type="PATRIC" id="fig|192952.21.peg.694"/>
<dbReference type="eggNOG" id="arCOG00982">
    <property type="taxonomic scope" value="Archaea"/>
</dbReference>
<dbReference type="HOGENOM" id="CLU_038362_0_0_2"/>
<dbReference type="UniPathway" id="UPA00940"/>
<dbReference type="Proteomes" id="UP000000595">
    <property type="component" value="Chromosome"/>
</dbReference>
<dbReference type="GO" id="GO:0005737">
    <property type="term" value="C:cytoplasm"/>
    <property type="evidence" value="ECO:0007669"/>
    <property type="project" value="UniProtKB-SubCell"/>
</dbReference>
<dbReference type="GO" id="GO:0106357">
    <property type="term" value="F:glycerol-1-phosphate dehydrogenase (NAD+) activity"/>
    <property type="evidence" value="ECO:0007669"/>
    <property type="project" value="RHEA"/>
</dbReference>
<dbReference type="GO" id="GO:0106358">
    <property type="term" value="F:glycerol-1-phosphate dehydrogenase (NADP+) activity"/>
    <property type="evidence" value="ECO:0007669"/>
    <property type="project" value="RHEA"/>
</dbReference>
<dbReference type="GO" id="GO:0046872">
    <property type="term" value="F:metal ion binding"/>
    <property type="evidence" value="ECO:0007669"/>
    <property type="project" value="UniProtKB-KW"/>
</dbReference>
<dbReference type="GO" id="GO:0006650">
    <property type="term" value="P:glycerophospholipid metabolic process"/>
    <property type="evidence" value="ECO:0007669"/>
    <property type="project" value="UniProtKB-UniRule"/>
</dbReference>
<dbReference type="GO" id="GO:0008654">
    <property type="term" value="P:phospholipid biosynthetic process"/>
    <property type="evidence" value="ECO:0007669"/>
    <property type="project" value="UniProtKB-KW"/>
</dbReference>
<dbReference type="CDD" id="cd08173">
    <property type="entry name" value="Gro1PDH"/>
    <property type="match status" value="1"/>
</dbReference>
<dbReference type="Gene3D" id="3.40.50.1970">
    <property type="match status" value="1"/>
</dbReference>
<dbReference type="Gene3D" id="1.20.1090.10">
    <property type="entry name" value="Dehydroquinate synthase-like - alpha domain"/>
    <property type="match status" value="1"/>
</dbReference>
<dbReference type="HAMAP" id="MF_00497_A">
    <property type="entry name" value="G1P_dehydrogenase_A"/>
    <property type="match status" value="1"/>
</dbReference>
<dbReference type="InterPro" id="IPR023002">
    <property type="entry name" value="G1P_dehydrogenase_arc"/>
</dbReference>
<dbReference type="InterPro" id="IPR032837">
    <property type="entry name" value="G1PDH"/>
</dbReference>
<dbReference type="InterPro" id="IPR016205">
    <property type="entry name" value="Glycerol_DH"/>
</dbReference>
<dbReference type="NCBIfam" id="NF002022">
    <property type="entry name" value="PRK00843.1"/>
    <property type="match status" value="1"/>
</dbReference>
<dbReference type="PANTHER" id="PTHR43616">
    <property type="entry name" value="GLYCEROL DEHYDROGENASE"/>
    <property type="match status" value="1"/>
</dbReference>
<dbReference type="PANTHER" id="PTHR43616:SF5">
    <property type="entry name" value="GLYCEROL DEHYDROGENASE 1"/>
    <property type="match status" value="1"/>
</dbReference>
<dbReference type="Pfam" id="PF13685">
    <property type="entry name" value="Fe-ADH_2"/>
    <property type="match status" value="1"/>
</dbReference>
<dbReference type="PIRSF" id="PIRSF000112">
    <property type="entry name" value="Glycerol_dehydrogenase"/>
    <property type="match status" value="1"/>
</dbReference>
<dbReference type="SUPFAM" id="SSF56796">
    <property type="entry name" value="Dehydroquinate synthase-like"/>
    <property type="match status" value="1"/>
</dbReference>
<sequence length="356" mass="38065">MKLTINKNSAKWMQLPRDVLVGHGVLEEVGDVCRDLKLKGNALIVTGSTTQDVAGKRVSRLLEDAGNSTETVLTCRATMEEVDKLMEKALNTEATFLLGVGSGRSIDLAKLASTRLEIPFISVPTAASHDGIASSRASVIDNGKNASIQAQAPLAVIADTEIISAAPYRFLAAGCGDIISNYTAVLDWELASRLRNEYFGEYAAALSRMAARVVIENADSIKPDHETSARLVVKALVSNGVAMSIAGSSRPASGSEHMFSHALDRIAPKAALHGEQCGVGTIMMMYLHGGNWQEIRDALKKIGAPTNAEELGIEDKYIIEALLQAHSIRPDRYTILGNGLTLSAAEKVARITKVIN</sequence>
<organism>
    <name type="scientific">Methanosarcina mazei (strain ATCC BAA-159 / DSM 3647 / Goe1 / Go1 / JCM 11833 / OCM 88)</name>
    <name type="common">Methanosarcina frisia</name>
    <dbReference type="NCBI Taxonomy" id="192952"/>
    <lineage>
        <taxon>Archaea</taxon>
        <taxon>Methanobacteriati</taxon>
        <taxon>Methanobacteriota</taxon>
        <taxon>Stenosarchaea group</taxon>
        <taxon>Methanomicrobia</taxon>
        <taxon>Methanosarcinales</taxon>
        <taxon>Methanosarcinaceae</taxon>
        <taxon>Methanosarcina</taxon>
    </lineage>
</organism>
<feature type="chain" id="PRO_0000157344" description="Glycerol-1-phosphate dehydrogenase [NAD(P)+]">
    <location>
        <begin position="1"/>
        <end position="356"/>
    </location>
</feature>
<feature type="binding site" evidence="1">
    <location>
        <begin position="103"/>
        <end position="107"/>
    </location>
    <ligand>
        <name>NAD(+)</name>
        <dbReference type="ChEBI" id="CHEBI:57540"/>
    </ligand>
</feature>
<feature type="binding site" evidence="1">
    <location>
        <begin position="125"/>
        <end position="128"/>
    </location>
    <ligand>
        <name>NAD(+)</name>
        <dbReference type="ChEBI" id="CHEBI:57540"/>
    </ligand>
</feature>
<feature type="binding site" evidence="1">
    <location>
        <position position="130"/>
    </location>
    <ligand>
        <name>substrate</name>
    </ligand>
</feature>
<feature type="binding site" evidence="1">
    <location>
        <position position="134"/>
    </location>
    <ligand>
        <name>NAD(+)</name>
        <dbReference type="ChEBI" id="CHEBI:57540"/>
    </ligand>
</feature>
<feature type="binding site" evidence="1">
    <location>
        <position position="177"/>
    </location>
    <ligand>
        <name>substrate</name>
    </ligand>
</feature>
<feature type="binding site" evidence="1">
    <location>
        <position position="177"/>
    </location>
    <ligand>
        <name>Zn(2+)</name>
        <dbReference type="ChEBI" id="CHEBI:29105"/>
        <note>catalytic</note>
    </ligand>
</feature>
<feature type="binding site" evidence="1">
    <location>
        <position position="257"/>
    </location>
    <ligand>
        <name>Zn(2+)</name>
        <dbReference type="ChEBI" id="CHEBI:29105"/>
        <note>catalytic</note>
    </ligand>
</feature>
<feature type="binding site" evidence="1">
    <location>
        <position position="261"/>
    </location>
    <ligand>
        <name>substrate</name>
    </ligand>
</feature>
<feature type="binding site" evidence="1">
    <location>
        <position position="273"/>
    </location>
    <ligand>
        <name>Zn(2+)</name>
        <dbReference type="ChEBI" id="CHEBI:29105"/>
        <note>catalytic</note>
    </ligand>
</feature>
<comment type="function">
    <text evidence="1">Catalyzes the NAD(P)H-dependent reduction of dihydroxyacetonephosphate (DHAP or glycerone phosphate) to glycerol 1-phosphate (G1P). The G1P thus generated is used as the glycerophosphate backbone of phospholipids in the cellular membranes of Archaea.</text>
</comment>
<comment type="catalytic activity">
    <reaction evidence="1">
        <text>sn-glycerol 1-phosphate + NAD(+) = dihydroxyacetone phosphate + NADH + H(+)</text>
        <dbReference type="Rhea" id="RHEA:21412"/>
        <dbReference type="ChEBI" id="CHEBI:15378"/>
        <dbReference type="ChEBI" id="CHEBI:57540"/>
        <dbReference type="ChEBI" id="CHEBI:57642"/>
        <dbReference type="ChEBI" id="CHEBI:57685"/>
        <dbReference type="ChEBI" id="CHEBI:57945"/>
        <dbReference type="EC" id="1.1.1.261"/>
    </reaction>
</comment>
<comment type="catalytic activity">
    <reaction evidence="1">
        <text>sn-glycerol 1-phosphate + NADP(+) = dihydroxyacetone phosphate + NADPH + H(+)</text>
        <dbReference type="Rhea" id="RHEA:21416"/>
        <dbReference type="ChEBI" id="CHEBI:15378"/>
        <dbReference type="ChEBI" id="CHEBI:57642"/>
        <dbReference type="ChEBI" id="CHEBI:57685"/>
        <dbReference type="ChEBI" id="CHEBI:57783"/>
        <dbReference type="ChEBI" id="CHEBI:58349"/>
        <dbReference type="EC" id="1.1.1.261"/>
    </reaction>
</comment>
<comment type="cofactor">
    <cofactor evidence="1">
        <name>Zn(2+)</name>
        <dbReference type="ChEBI" id="CHEBI:29105"/>
    </cofactor>
    <text evidence="1">Binds 1 zinc ion per subunit.</text>
</comment>
<comment type="pathway">
    <text evidence="1">Membrane lipid metabolism; glycerophospholipid metabolism.</text>
</comment>
<comment type="subcellular location">
    <subcellularLocation>
        <location evidence="1">Cytoplasm</location>
    </subcellularLocation>
</comment>
<comment type="similarity">
    <text evidence="1">Belongs to the glycerol-1-phosphate dehydrogenase family.</text>
</comment>